<name>YJ72_SCHPO</name>
<sequence length="405" mass="46653">MAEEGYVAIVTGATGLNGAAIIKRLSEDDNCKTIHCISRSLKDEYPRKIKHHSIDLLNEEPKDIAKKFSLEGVKGINYAYFAAYKEENNEEKLCEVNGNMLRNFVQALELTSIQTLRRVILTTGLKFYGLHLGEVRLPMIETDIRVPETFSGTPNFYYVQEDILKEFSNGKKWDYTIAMPNDICGVSKGSYMNEAFTIALYALVCRELHEPFRFPGNEKFYLGFDDISYSKLIADFQLWMTFKAECSEEKFNIVNGDIHSWSRTWPKIAEYFGVEVPKNQFATDFTLSTEVTLSTPSPINLYEKELGIKHTPNSKIINQISLQQWVKQKKVQDAWRTIAEREKLNAHALEVGTWAFCDFLFGRTYNVISSMSKARKLGYTDYYDTFDGFKETFDELKKQKQIPQN</sequence>
<dbReference type="EMBL" id="CU329672">
    <property type="protein sequence ID" value="CAA21227.1"/>
    <property type="molecule type" value="Genomic_DNA"/>
</dbReference>
<dbReference type="PIR" id="T41593">
    <property type="entry name" value="T41593"/>
</dbReference>
<dbReference type="RefSeq" id="NP_587677.1">
    <property type="nucleotide sequence ID" value="NM_001022672.2"/>
</dbReference>
<dbReference type="SMR" id="O74913"/>
<dbReference type="BioGRID" id="275682">
    <property type="interactions" value="2"/>
</dbReference>
<dbReference type="FunCoup" id="O74913">
    <property type="interactions" value="21"/>
</dbReference>
<dbReference type="STRING" id="284812.O74913"/>
<dbReference type="PaxDb" id="4896-SPCC757.02c.1"/>
<dbReference type="EnsemblFungi" id="SPCC757.02c.1">
    <property type="protein sequence ID" value="SPCC757.02c.1:pep"/>
    <property type="gene ID" value="SPCC757.02c"/>
</dbReference>
<dbReference type="KEGG" id="spo:2539110"/>
<dbReference type="PomBase" id="SPCC757.02c"/>
<dbReference type="VEuPathDB" id="FungiDB:SPCC757.02c"/>
<dbReference type="eggNOG" id="ENOG502QSRH">
    <property type="taxonomic scope" value="Eukaryota"/>
</dbReference>
<dbReference type="HOGENOM" id="CLU_030125_1_0_1"/>
<dbReference type="InParanoid" id="O74913"/>
<dbReference type="OMA" id="GRPFVFP"/>
<dbReference type="PhylomeDB" id="O74913"/>
<dbReference type="PRO" id="PR:O74913"/>
<dbReference type="Proteomes" id="UP000002485">
    <property type="component" value="Chromosome III"/>
</dbReference>
<dbReference type="GO" id="GO:0016491">
    <property type="term" value="F:oxidoreductase activity"/>
    <property type="evidence" value="ECO:0000255"/>
    <property type="project" value="PomBase"/>
</dbReference>
<dbReference type="CDD" id="cd08948">
    <property type="entry name" value="5beta-POR_like_SDR_a"/>
    <property type="match status" value="1"/>
</dbReference>
<dbReference type="Gene3D" id="3.40.50.720">
    <property type="entry name" value="NAD(P)-binding Rossmann-like Domain"/>
    <property type="match status" value="1"/>
</dbReference>
<dbReference type="InterPro" id="IPR036291">
    <property type="entry name" value="NAD(P)-bd_dom_sf"/>
</dbReference>
<dbReference type="InterPro" id="IPR055222">
    <property type="entry name" value="PRISE-like_Rossmann-fold"/>
</dbReference>
<dbReference type="PANTHER" id="PTHR32487">
    <property type="entry name" value="3-OXO-DELTA(4,5)-STEROID 5-BETA-REDUCTASE"/>
    <property type="match status" value="1"/>
</dbReference>
<dbReference type="PANTHER" id="PTHR32487:SF0">
    <property type="entry name" value="3-OXO-DELTA(4,5)-STEROID 5-BETA-REDUCTASE"/>
    <property type="match status" value="1"/>
</dbReference>
<dbReference type="Pfam" id="PF22917">
    <property type="entry name" value="PRISE"/>
    <property type="match status" value="1"/>
</dbReference>
<dbReference type="SUPFAM" id="SSF51735">
    <property type="entry name" value="NAD(P)-binding Rossmann-fold domains"/>
    <property type="match status" value="1"/>
</dbReference>
<reference key="1">
    <citation type="journal article" date="2002" name="Nature">
        <title>The genome sequence of Schizosaccharomyces pombe.</title>
        <authorList>
            <person name="Wood V."/>
            <person name="Gwilliam R."/>
            <person name="Rajandream M.A."/>
            <person name="Lyne M.H."/>
            <person name="Lyne R."/>
            <person name="Stewart A."/>
            <person name="Sgouros J.G."/>
            <person name="Peat N."/>
            <person name="Hayles J."/>
            <person name="Baker S.G."/>
            <person name="Basham D."/>
            <person name="Bowman S."/>
            <person name="Brooks K."/>
            <person name="Brown D."/>
            <person name="Brown S."/>
            <person name="Chillingworth T."/>
            <person name="Churcher C.M."/>
            <person name="Collins M."/>
            <person name="Connor R."/>
            <person name="Cronin A."/>
            <person name="Davis P."/>
            <person name="Feltwell T."/>
            <person name="Fraser A."/>
            <person name="Gentles S."/>
            <person name="Goble A."/>
            <person name="Hamlin N."/>
            <person name="Harris D.E."/>
            <person name="Hidalgo J."/>
            <person name="Hodgson G."/>
            <person name="Holroyd S."/>
            <person name="Hornsby T."/>
            <person name="Howarth S."/>
            <person name="Huckle E.J."/>
            <person name="Hunt S."/>
            <person name="Jagels K."/>
            <person name="James K.D."/>
            <person name="Jones L."/>
            <person name="Jones M."/>
            <person name="Leather S."/>
            <person name="McDonald S."/>
            <person name="McLean J."/>
            <person name="Mooney P."/>
            <person name="Moule S."/>
            <person name="Mungall K.L."/>
            <person name="Murphy L.D."/>
            <person name="Niblett D."/>
            <person name="Odell C."/>
            <person name="Oliver K."/>
            <person name="O'Neil S."/>
            <person name="Pearson D."/>
            <person name="Quail M.A."/>
            <person name="Rabbinowitsch E."/>
            <person name="Rutherford K.M."/>
            <person name="Rutter S."/>
            <person name="Saunders D."/>
            <person name="Seeger K."/>
            <person name="Sharp S."/>
            <person name="Skelton J."/>
            <person name="Simmonds M.N."/>
            <person name="Squares R."/>
            <person name="Squares S."/>
            <person name="Stevens K."/>
            <person name="Taylor K."/>
            <person name="Taylor R.G."/>
            <person name="Tivey A."/>
            <person name="Walsh S.V."/>
            <person name="Warren T."/>
            <person name="Whitehead S."/>
            <person name="Woodward J.R."/>
            <person name="Volckaert G."/>
            <person name="Aert R."/>
            <person name="Robben J."/>
            <person name="Grymonprez B."/>
            <person name="Weltjens I."/>
            <person name="Vanstreels E."/>
            <person name="Rieger M."/>
            <person name="Schaefer M."/>
            <person name="Mueller-Auer S."/>
            <person name="Gabel C."/>
            <person name="Fuchs M."/>
            <person name="Duesterhoeft A."/>
            <person name="Fritzc C."/>
            <person name="Holzer E."/>
            <person name="Moestl D."/>
            <person name="Hilbert H."/>
            <person name="Borzym K."/>
            <person name="Langer I."/>
            <person name="Beck A."/>
            <person name="Lehrach H."/>
            <person name="Reinhardt R."/>
            <person name="Pohl T.M."/>
            <person name="Eger P."/>
            <person name="Zimmermann W."/>
            <person name="Wedler H."/>
            <person name="Wambutt R."/>
            <person name="Purnelle B."/>
            <person name="Goffeau A."/>
            <person name="Cadieu E."/>
            <person name="Dreano S."/>
            <person name="Gloux S."/>
            <person name="Lelaure V."/>
            <person name="Mottier S."/>
            <person name="Galibert F."/>
            <person name="Aves S.J."/>
            <person name="Xiang Z."/>
            <person name="Hunt C."/>
            <person name="Moore K."/>
            <person name="Hurst S.M."/>
            <person name="Lucas M."/>
            <person name="Rochet M."/>
            <person name="Gaillardin C."/>
            <person name="Tallada V.A."/>
            <person name="Garzon A."/>
            <person name="Thode G."/>
            <person name="Daga R.R."/>
            <person name="Cruzado L."/>
            <person name="Jimenez J."/>
            <person name="Sanchez M."/>
            <person name="del Rey F."/>
            <person name="Benito J."/>
            <person name="Dominguez A."/>
            <person name="Revuelta J.L."/>
            <person name="Moreno S."/>
            <person name="Armstrong J."/>
            <person name="Forsburg S.L."/>
            <person name="Cerutti L."/>
            <person name="Lowe T."/>
            <person name="McCombie W.R."/>
            <person name="Paulsen I."/>
            <person name="Potashkin J."/>
            <person name="Shpakovski G.V."/>
            <person name="Ussery D."/>
            <person name="Barrell B.G."/>
            <person name="Nurse P."/>
        </authorList>
    </citation>
    <scope>NUCLEOTIDE SEQUENCE [LARGE SCALE GENOMIC DNA]</scope>
    <source>
        <strain>972 / ATCC 24843</strain>
    </source>
</reference>
<organism>
    <name type="scientific">Schizosaccharomyces pombe (strain 972 / ATCC 24843)</name>
    <name type="common">Fission yeast</name>
    <dbReference type="NCBI Taxonomy" id="284812"/>
    <lineage>
        <taxon>Eukaryota</taxon>
        <taxon>Fungi</taxon>
        <taxon>Dikarya</taxon>
        <taxon>Ascomycota</taxon>
        <taxon>Taphrinomycotina</taxon>
        <taxon>Schizosaccharomycetes</taxon>
        <taxon>Schizosaccharomycetales</taxon>
        <taxon>Schizosaccharomycetaceae</taxon>
        <taxon>Schizosaccharomyces</taxon>
    </lineage>
</organism>
<proteinExistence type="predicted"/>
<feature type="chain" id="PRO_0000372341" description="Uncharacterized protein C757.02c">
    <location>
        <begin position="1"/>
        <end position="405"/>
    </location>
</feature>
<accession>O74913</accession>
<protein>
    <recommendedName>
        <fullName>Uncharacterized protein C757.02c</fullName>
    </recommendedName>
</protein>
<gene>
    <name type="ORF">SPCC757.02c</name>
</gene>
<keyword id="KW-1185">Reference proteome</keyword>